<protein>
    <recommendedName>
        <fullName evidence="1">Protein pelota homolog</fullName>
        <ecNumber evidence="1">3.1.-.-</ecNumber>
    </recommendedName>
</protein>
<reference key="1">
    <citation type="journal article" date="2004" name="J. Bacteriol.">
        <title>Complete genome sequence of the genetically tractable hydrogenotrophic methanogen Methanococcus maripaludis.</title>
        <authorList>
            <person name="Hendrickson E.L."/>
            <person name="Kaul R."/>
            <person name="Zhou Y."/>
            <person name="Bovee D."/>
            <person name="Chapman P."/>
            <person name="Chung J."/>
            <person name="Conway de Macario E."/>
            <person name="Dodsworth J.A."/>
            <person name="Gillett W."/>
            <person name="Graham D.E."/>
            <person name="Hackett M."/>
            <person name="Haydock A.K."/>
            <person name="Kang A."/>
            <person name="Land M.L."/>
            <person name="Levy R."/>
            <person name="Lie T.J."/>
            <person name="Major T.A."/>
            <person name="Moore B.C."/>
            <person name="Porat I."/>
            <person name="Palmeiri A."/>
            <person name="Rouse G."/>
            <person name="Saenphimmachak C."/>
            <person name="Soell D."/>
            <person name="Van Dien S."/>
            <person name="Wang T."/>
            <person name="Whitman W.B."/>
            <person name="Xia Q."/>
            <person name="Zhang Y."/>
            <person name="Larimer F.W."/>
            <person name="Olson M.V."/>
            <person name="Leigh J.A."/>
        </authorList>
    </citation>
    <scope>NUCLEOTIDE SEQUENCE [LARGE SCALE GENOMIC DNA]</scope>
    <source>
        <strain>DSM 14266 / JCM 13030 / NBRC 101832 / S2 / LL</strain>
    </source>
</reference>
<proteinExistence type="inferred from homology"/>
<comment type="function">
    <text evidence="1">May function in recognizing stalled ribosomes, interact with stem-loop structures in stalled mRNA molecules, and effect endonucleolytic cleavage of the mRNA. May play a role in the release non-functional ribosomes and degradation of damaged mRNAs. Has endoribonuclease activity.</text>
</comment>
<comment type="cofactor">
    <cofactor evidence="1">
        <name>a divalent metal cation</name>
        <dbReference type="ChEBI" id="CHEBI:60240"/>
    </cofactor>
</comment>
<comment type="subunit">
    <text evidence="1">Monomer.</text>
</comment>
<comment type="subcellular location">
    <subcellularLocation>
        <location evidence="1">Cytoplasm</location>
    </subcellularLocation>
</comment>
<comment type="domain">
    <text evidence="1">The N-terminal domain has the RNA-binding Sm fold. It harbors the endoribonuclease activity.</text>
</comment>
<comment type="similarity">
    <text evidence="1">Belongs to the eukaryotic release factor 1 family. Pelota subfamily.</text>
</comment>
<feature type="chain" id="PRO_0000361795" description="Protein pelota homolog">
    <location>
        <begin position="1"/>
        <end position="348"/>
    </location>
</feature>
<accession>Q6M133</accession>
<dbReference type="EC" id="3.1.-.-" evidence="1"/>
<dbReference type="EMBL" id="BX950229">
    <property type="protein sequence ID" value="CAF29641.1"/>
    <property type="molecule type" value="Genomic_DNA"/>
</dbReference>
<dbReference type="RefSeq" id="WP_011170029.1">
    <property type="nucleotide sequence ID" value="NC_005791.1"/>
</dbReference>
<dbReference type="SMR" id="Q6M133"/>
<dbReference type="STRING" id="267377.MMP0085"/>
<dbReference type="EnsemblBacteria" id="CAF29641">
    <property type="protein sequence ID" value="CAF29641"/>
    <property type="gene ID" value="MMP0085"/>
</dbReference>
<dbReference type="GeneID" id="2761608"/>
<dbReference type="KEGG" id="mmp:MMP0085"/>
<dbReference type="PATRIC" id="fig|267377.15.peg.86"/>
<dbReference type="eggNOG" id="arCOG01741">
    <property type="taxonomic scope" value="Archaea"/>
</dbReference>
<dbReference type="HOGENOM" id="CLU_023334_0_0_2"/>
<dbReference type="OrthoDB" id="31300at2157"/>
<dbReference type="Proteomes" id="UP000000590">
    <property type="component" value="Chromosome"/>
</dbReference>
<dbReference type="GO" id="GO:0005737">
    <property type="term" value="C:cytoplasm"/>
    <property type="evidence" value="ECO:0007669"/>
    <property type="project" value="UniProtKB-SubCell"/>
</dbReference>
<dbReference type="GO" id="GO:0004519">
    <property type="term" value="F:endonuclease activity"/>
    <property type="evidence" value="ECO:0007669"/>
    <property type="project" value="UniProtKB-UniRule"/>
</dbReference>
<dbReference type="GO" id="GO:0046872">
    <property type="term" value="F:metal ion binding"/>
    <property type="evidence" value="ECO:0007669"/>
    <property type="project" value="UniProtKB-UniRule"/>
</dbReference>
<dbReference type="GO" id="GO:0070651">
    <property type="term" value="P:nonfunctional rRNA decay"/>
    <property type="evidence" value="ECO:0007669"/>
    <property type="project" value="TreeGrafter"/>
</dbReference>
<dbReference type="GO" id="GO:0070966">
    <property type="term" value="P:nuclear-transcribed mRNA catabolic process, no-go decay"/>
    <property type="evidence" value="ECO:0007669"/>
    <property type="project" value="InterPro"/>
</dbReference>
<dbReference type="GO" id="GO:0070481">
    <property type="term" value="P:nuclear-transcribed mRNA catabolic process, non-stop decay"/>
    <property type="evidence" value="ECO:0007669"/>
    <property type="project" value="InterPro"/>
</dbReference>
<dbReference type="GO" id="GO:0032790">
    <property type="term" value="P:ribosome disassembly"/>
    <property type="evidence" value="ECO:0007669"/>
    <property type="project" value="TreeGrafter"/>
</dbReference>
<dbReference type="GO" id="GO:0071025">
    <property type="term" value="P:RNA surveillance"/>
    <property type="evidence" value="ECO:0007669"/>
    <property type="project" value="InterPro"/>
</dbReference>
<dbReference type="Gene3D" id="3.30.1330.30">
    <property type="match status" value="1"/>
</dbReference>
<dbReference type="Gene3D" id="3.30.420.60">
    <property type="entry name" value="eRF1 domain 2"/>
    <property type="match status" value="1"/>
</dbReference>
<dbReference type="Gene3D" id="2.30.30.870">
    <property type="entry name" value="Pelota, domain A"/>
    <property type="match status" value="1"/>
</dbReference>
<dbReference type="HAMAP" id="MF_01853">
    <property type="entry name" value="PelO"/>
    <property type="match status" value="1"/>
</dbReference>
<dbReference type="InterPro" id="IPR042226">
    <property type="entry name" value="eFR1_2_sf"/>
</dbReference>
<dbReference type="InterPro" id="IPR005140">
    <property type="entry name" value="eRF1_1_Pelota"/>
</dbReference>
<dbReference type="InterPro" id="IPR005142">
    <property type="entry name" value="eRF1_3"/>
</dbReference>
<dbReference type="InterPro" id="IPR038069">
    <property type="entry name" value="Pelota/DOM34_N"/>
</dbReference>
<dbReference type="InterPro" id="IPR023521">
    <property type="entry name" value="Pelota_arc"/>
</dbReference>
<dbReference type="InterPro" id="IPR029064">
    <property type="entry name" value="Ribosomal_eL30-like_sf"/>
</dbReference>
<dbReference type="InterPro" id="IPR004405">
    <property type="entry name" value="Transl-rel_pelota"/>
</dbReference>
<dbReference type="NCBIfam" id="TIGR00111">
    <property type="entry name" value="pelota"/>
    <property type="match status" value="1"/>
</dbReference>
<dbReference type="PANTHER" id="PTHR10853">
    <property type="entry name" value="PELOTA"/>
    <property type="match status" value="1"/>
</dbReference>
<dbReference type="PANTHER" id="PTHR10853:SF0">
    <property type="entry name" value="PROTEIN PELOTA HOMOLOG"/>
    <property type="match status" value="1"/>
</dbReference>
<dbReference type="Pfam" id="PF03463">
    <property type="entry name" value="eRF1_1"/>
    <property type="match status" value="1"/>
</dbReference>
<dbReference type="Pfam" id="PF03465">
    <property type="entry name" value="eRF1_3"/>
    <property type="match status" value="1"/>
</dbReference>
<dbReference type="SMART" id="SM01194">
    <property type="entry name" value="eRF1_1"/>
    <property type="match status" value="1"/>
</dbReference>
<dbReference type="SUPFAM" id="SSF159065">
    <property type="entry name" value="Dom34/Pelota N-terminal domain-like"/>
    <property type="match status" value="1"/>
</dbReference>
<dbReference type="SUPFAM" id="SSF55315">
    <property type="entry name" value="L30e-like"/>
    <property type="match status" value="1"/>
</dbReference>
<dbReference type="SUPFAM" id="SSF53137">
    <property type="entry name" value="Translational machinery components"/>
    <property type="match status" value="1"/>
</dbReference>
<sequence>MKIIQEIPERNIIKLIPENLDDLWHLSHIIQPYNAIYAVTERRTEDKGDKLRADRGTKRRVFLGIKAEKINFHEDFNRLRVSGKIIHAPDDIPIGSYHTIDIEPFLQVSVQKNWKKWDIERLKEAEDSSKKPKVVVVIMDDSEADIFLVREFGIKELASIKSGVSKKLDYKQNEQAKFSYYSDIINSISEFEGKILFAGPGFGRNNIQNYISEKYKSLAPNVVVESANHTGKSGLSEILKSGIIDKIYGEARISKETQVVEKLLEEISKKGLAAYGIESVNNAMNFSAIDTLLLTDEYLRRNRRSVENLMNSVENINGNIIIVSTEHDAGKQLKALGGISALLRFPIE</sequence>
<evidence type="ECO:0000255" key="1">
    <source>
        <dbReference type="HAMAP-Rule" id="MF_01853"/>
    </source>
</evidence>
<keyword id="KW-0963">Cytoplasm</keyword>
<keyword id="KW-0255">Endonuclease</keyword>
<keyword id="KW-0378">Hydrolase</keyword>
<keyword id="KW-0479">Metal-binding</keyword>
<keyword id="KW-0540">Nuclease</keyword>
<keyword id="KW-1185">Reference proteome</keyword>
<gene>
    <name evidence="1" type="primary">pelA</name>
    <name type="ordered locus">MMP0085</name>
</gene>
<organism>
    <name type="scientific">Methanococcus maripaludis (strain DSM 14266 / JCM 13030 / NBRC 101832 / S2 / LL)</name>
    <dbReference type="NCBI Taxonomy" id="267377"/>
    <lineage>
        <taxon>Archaea</taxon>
        <taxon>Methanobacteriati</taxon>
        <taxon>Methanobacteriota</taxon>
        <taxon>Methanomada group</taxon>
        <taxon>Methanococci</taxon>
        <taxon>Methanococcales</taxon>
        <taxon>Methanococcaceae</taxon>
        <taxon>Methanococcus</taxon>
    </lineage>
</organism>
<name>PELO_METMP</name>